<protein>
    <recommendedName>
        <fullName evidence="1">Transcriptional regulator LsrR</fullName>
    </recommendedName>
</protein>
<reference key="1">
    <citation type="journal article" date="2008" name="J. Bacteriol.">
        <title>Insights into the environmental resistance gene pool from the genome sequence of the multidrug-resistant environmental isolate Escherichia coli SMS-3-5.</title>
        <authorList>
            <person name="Fricke W.F."/>
            <person name="Wright M.S."/>
            <person name="Lindell A.H."/>
            <person name="Harkins D.M."/>
            <person name="Baker-Austin C."/>
            <person name="Ravel J."/>
            <person name="Stepanauskas R."/>
        </authorList>
    </citation>
    <scope>NUCLEOTIDE SEQUENCE [LARGE SCALE GENOMIC DNA]</scope>
    <source>
        <strain>SMS-3-5 / SECEC</strain>
    </source>
</reference>
<feature type="chain" id="PRO_0000351613" description="Transcriptional regulator LsrR">
    <location>
        <begin position="1"/>
        <end position="317"/>
    </location>
</feature>
<feature type="DNA-binding region" description="H-T-H motif" evidence="2">
    <location>
        <begin position="33"/>
        <end position="56"/>
    </location>
</feature>
<proteinExistence type="inferred from homology"/>
<evidence type="ECO:0000250" key="1">
    <source>
        <dbReference type="UniProtKB" id="P76141"/>
    </source>
</evidence>
<evidence type="ECO:0000305" key="2"/>
<comment type="function">
    <text evidence="1">Transcriptional regulator that represses the expression of the lsr operon in the absence of the quorum-sensing signaling molecule autoinducer 2 (AI-2) (By similarity). It also represses the expression of the lsrRK operon (By similarity). Acts by binding directly to the lsrA and lsrR promoter regions (By similarity). In the presence of phosphorylated autoinducer-2 (phospho-AI-2), LsrR is inactivated, leading to the transcription of the genes (By similarity).</text>
</comment>
<comment type="activity regulation">
    <text evidence="1">Inactivated by phosphorylated autoinducer-2 (phospho-AI-2) (By similarity). Phospho-AI-2 acts by binding to LsrR, which is then unable to bind to the promoter regions, allowing the transcription of the target genes (By similarity).</text>
</comment>
<comment type="subcellular location">
    <subcellularLocation>
        <location evidence="2">Cytoplasm</location>
    </subcellularLocation>
</comment>
<comment type="similarity">
    <text evidence="2">Belongs to the SorC transcriptional regulatory family.</text>
</comment>
<organism>
    <name type="scientific">Escherichia coli (strain SMS-3-5 / SECEC)</name>
    <dbReference type="NCBI Taxonomy" id="439855"/>
    <lineage>
        <taxon>Bacteria</taxon>
        <taxon>Pseudomonadati</taxon>
        <taxon>Pseudomonadota</taxon>
        <taxon>Gammaproteobacteria</taxon>
        <taxon>Enterobacterales</taxon>
        <taxon>Enterobacteriaceae</taxon>
        <taxon>Escherichia</taxon>
    </lineage>
</organism>
<name>LSRR_ECOSM</name>
<gene>
    <name type="primary">lsrR</name>
    <name type="ordered locus">EcSMS35_1660</name>
</gene>
<keyword id="KW-0963">Cytoplasm</keyword>
<keyword id="KW-0238">DNA-binding</keyword>
<keyword id="KW-0678">Repressor</keyword>
<keyword id="KW-0804">Transcription</keyword>
<keyword id="KW-0805">Transcription regulation</keyword>
<dbReference type="EMBL" id="CP000970">
    <property type="protein sequence ID" value="ACB16095.1"/>
    <property type="molecule type" value="Genomic_DNA"/>
</dbReference>
<dbReference type="RefSeq" id="WP_000154347.1">
    <property type="nucleotide sequence ID" value="NC_010498.1"/>
</dbReference>
<dbReference type="SMR" id="B1LFA3"/>
<dbReference type="KEGG" id="ecm:EcSMS35_1660"/>
<dbReference type="HOGENOM" id="CLU_054506_0_1_6"/>
<dbReference type="Proteomes" id="UP000007011">
    <property type="component" value="Chromosome"/>
</dbReference>
<dbReference type="GO" id="GO:0005737">
    <property type="term" value="C:cytoplasm"/>
    <property type="evidence" value="ECO:0007669"/>
    <property type="project" value="UniProtKB-SubCell"/>
</dbReference>
<dbReference type="GO" id="GO:0030246">
    <property type="term" value="F:carbohydrate binding"/>
    <property type="evidence" value="ECO:0007669"/>
    <property type="project" value="InterPro"/>
</dbReference>
<dbReference type="GO" id="GO:0003677">
    <property type="term" value="F:DNA binding"/>
    <property type="evidence" value="ECO:0007669"/>
    <property type="project" value="UniProtKB-KW"/>
</dbReference>
<dbReference type="FunFam" id="1.10.10.10:FF:000195">
    <property type="entry name" value="LsrR family transcriptional regulator"/>
    <property type="match status" value="1"/>
</dbReference>
<dbReference type="Gene3D" id="3.40.50.1360">
    <property type="match status" value="1"/>
</dbReference>
<dbReference type="Gene3D" id="1.10.10.10">
    <property type="entry name" value="Winged helix-like DNA-binding domain superfamily/Winged helix DNA-binding domain"/>
    <property type="match status" value="1"/>
</dbReference>
<dbReference type="InterPro" id="IPR037171">
    <property type="entry name" value="NagB/RpiA_transferase-like"/>
</dbReference>
<dbReference type="InterPro" id="IPR051054">
    <property type="entry name" value="SorC_transcr_regulators"/>
</dbReference>
<dbReference type="InterPro" id="IPR007324">
    <property type="entry name" value="Sugar-bd_dom_put"/>
</dbReference>
<dbReference type="InterPro" id="IPR036388">
    <property type="entry name" value="WH-like_DNA-bd_sf"/>
</dbReference>
<dbReference type="NCBIfam" id="NF011947">
    <property type="entry name" value="PRK15418.1"/>
    <property type="match status" value="1"/>
</dbReference>
<dbReference type="PANTHER" id="PTHR34294:SF1">
    <property type="entry name" value="TRANSCRIPTIONAL REGULATOR LSRR"/>
    <property type="match status" value="1"/>
</dbReference>
<dbReference type="PANTHER" id="PTHR34294">
    <property type="entry name" value="TRANSCRIPTIONAL REGULATOR-RELATED"/>
    <property type="match status" value="1"/>
</dbReference>
<dbReference type="Pfam" id="PF04198">
    <property type="entry name" value="Sugar-bind"/>
    <property type="match status" value="1"/>
</dbReference>
<dbReference type="SUPFAM" id="SSF100950">
    <property type="entry name" value="NagB/RpiA/CoA transferase-like"/>
    <property type="match status" value="1"/>
</dbReference>
<accession>B1LFA3</accession>
<sequence length="317" mass="33754">MTINDSVISEQGMCEEEQVARIAWFYYHDGLTQSEISDRLGLTRLKVSRLLEKGHQSGIIRVQINSRFEGCLEYETQLCRQFSLQHVRVIPGLADADVGGRLGIGAAHMLMSLLQPQQMLAIGFGEATMNTLQRLSGFISSQQIRLVTLSGGVGSYMTGIGQLNAACSVNIIPAPLRASSADIAHTLKNENCVKDVLLAAQAADVAIVGIGAVSQQDDATIIRSGYISQGEQLMIGRKGAVGDILGYFFDAKGDVVTDIKIHNELIGLPLSALKTIPVRVGVAGGENKAEAIAAAMKGGYINALVTDQDTAAAILRS</sequence>